<reference key="1">
    <citation type="journal article" date="2001" name="Nature">
        <title>Genome sequence of enterohaemorrhagic Escherichia coli O157:H7.</title>
        <authorList>
            <person name="Perna N.T."/>
            <person name="Plunkett G. III"/>
            <person name="Burland V."/>
            <person name="Mau B."/>
            <person name="Glasner J.D."/>
            <person name="Rose D.J."/>
            <person name="Mayhew G.F."/>
            <person name="Evans P.S."/>
            <person name="Gregor J."/>
            <person name="Kirkpatrick H.A."/>
            <person name="Posfai G."/>
            <person name="Hackett J."/>
            <person name="Klink S."/>
            <person name="Boutin A."/>
            <person name="Shao Y."/>
            <person name="Miller L."/>
            <person name="Grotbeck E.J."/>
            <person name="Davis N.W."/>
            <person name="Lim A."/>
            <person name="Dimalanta E.T."/>
            <person name="Potamousis K."/>
            <person name="Apodaca J."/>
            <person name="Anantharaman T.S."/>
            <person name="Lin J."/>
            <person name="Yen G."/>
            <person name="Schwartz D.C."/>
            <person name="Welch R.A."/>
            <person name="Blattner F.R."/>
        </authorList>
    </citation>
    <scope>NUCLEOTIDE SEQUENCE [LARGE SCALE GENOMIC DNA]</scope>
    <source>
        <strain>O157:H7 / EDL933 / ATCC 700927 / EHEC</strain>
    </source>
</reference>
<reference key="2">
    <citation type="journal article" date="2001" name="DNA Res.">
        <title>Complete genome sequence of enterohemorrhagic Escherichia coli O157:H7 and genomic comparison with a laboratory strain K-12.</title>
        <authorList>
            <person name="Hayashi T."/>
            <person name="Makino K."/>
            <person name="Ohnishi M."/>
            <person name="Kurokawa K."/>
            <person name="Ishii K."/>
            <person name="Yokoyama K."/>
            <person name="Han C.-G."/>
            <person name="Ohtsubo E."/>
            <person name="Nakayama K."/>
            <person name="Murata T."/>
            <person name="Tanaka M."/>
            <person name="Tobe T."/>
            <person name="Iida T."/>
            <person name="Takami H."/>
            <person name="Honda T."/>
            <person name="Sasakawa C."/>
            <person name="Ogasawara N."/>
            <person name="Yasunaga T."/>
            <person name="Kuhara S."/>
            <person name="Shiba T."/>
            <person name="Hattori M."/>
            <person name="Shinagawa H."/>
        </authorList>
    </citation>
    <scope>NUCLEOTIDE SEQUENCE [LARGE SCALE GENOMIC DNA]</scope>
    <source>
        <strain>O157:H7 / Sakai / RIMD 0509952 / EHEC</strain>
    </source>
</reference>
<dbReference type="EMBL" id="AE005174">
    <property type="protein sequence ID" value="AAG58857.1"/>
    <property type="status" value="ALT_INIT"/>
    <property type="molecule type" value="Genomic_DNA"/>
</dbReference>
<dbReference type="EMBL" id="BA000007">
    <property type="status" value="NOT_ANNOTATED_CDS"/>
    <property type="molecule type" value="Genomic_DNA"/>
</dbReference>
<dbReference type="PIR" id="E86049">
    <property type="entry name" value="E86049"/>
</dbReference>
<dbReference type="RefSeq" id="WP_001302207.1">
    <property type="nucleotide sequence ID" value="NZ_VOAI01000011.1"/>
</dbReference>
<dbReference type="SMR" id="Q8X4C9"/>
<dbReference type="STRING" id="155864.Z5148"/>
<dbReference type="KEGG" id="ece:Z5148"/>
<dbReference type="PATRIC" id="fig|83334.175.peg.399"/>
<dbReference type="eggNOG" id="ENOG5032TQY">
    <property type="taxonomic scope" value="Bacteria"/>
</dbReference>
<dbReference type="OMA" id="QNNYWEA"/>
<dbReference type="Proteomes" id="UP000000558">
    <property type="component" value="Chromosome"/>
</dbReference>
<dbReference type="Proteomes" id="UP000002519">
    <property type="component" value="Chromosome"/>
</dbReference>
<dbReference type="InterPro" id="IPR048144">
    <property type="entry name" value="YicS_fam"/>
</dbReference>
<dbReference type="NCBIfam" id="NF041639">
    <property type="entry name" value="YicS_fam"/>
    <property type="match status" value="1"/>
</dbReference>
<name>YICS_ECO57</name>
<organism>
    <name type="scientific">Escherichia coli O157:H7</name>
    <dbReference type="NCBI Taxonomy" id="83334"/>
    <lineage>
        <taxon>Bacteria</taxon>
        <taxon>Pseudomonadati</taxon>
        <taxon>Pseudomonadota</taxon>
        <taxon>Gammaproteobacteria</taxon>
        <taxon>Enterobacterales</taxon>
        <taxon>Enterobacteriaceae</taxon>
        <taxon>Escherichia</taxon>
    </lineage>
</organism>
<proteinExistence type="predicted"/>
<evidence type="ECO:0000305" key="1"/>
<sequence length="97" mass="11061">MKPTMLLMITVFLIFPALSQAESPFSSLQSAKEKTTVLQDLRKICTPQASLSDEAWEKLMLSDENNKQHIREAIVAMERNNQSNYWEALGKVECPDM</sequence>
<protein>
    <recommendedName>
        <fullName>Uncharacterized protein YicS</fullName>
    </recommendedName>
</protein>
<feature type="chain" id="PRO_0000262295" description="Uncharacterized protein YicS">
    <location>
        <begin position="1"/>
        <end position="97"/>
    </location>
</feature>
<comment type="sequence caution" evidence="1">
    <conflict type="erroneous initiation">
        <sequence resource="EMBL-CDS" id="AAG58857"/>
    </conflict>
</comment>
<accession>Q8X4C9</accession>
<keyword id="KW-1185">Reference proteome</keyword>
<gene>
    <name type="primary">yicS</name>
    <name type="ordered locus">Z5148</name>
    <name type="ordered locus">ECs4595.1</name>
</gene>